<keyword id="KW-0665">Pyrimidine biosynthesis</keyword>
<keyword id="KW-0808">Transferase</keyword>
<dbReference type="EC" id="2.1.3.2" evidence="1"/>
<dbReference type="EMBL" id="CP000958">
    <property type="protein sequence ID" value="ACA90016.1"/>
    <property type="molecule type" value="Genomic_DNA"/>
</dbReference>
<dbReference type="RefSeq" id="WP_012328024.1">
    <property type="nucleotide sequence ID" value="NC_010508.1"/>
</dbReference>
<dbReference type="SMR" id="B1JWP2"/>
<dbReference type="GeneID" id="83047631"/>
<dbReference type="KEGG" id="bcm:Bcenmc03_0838"/>
<dbReference type="HOGENOM" id="CLU_043846_2_0_4"/>
<dbReference type="UniPathway" id="UPA00070">
    <property type="reaction ID" value="UER00116"/>
</dbReference>
<dbReference type="Proteomes" id="UP000002169">
    <property type="component" value="Chromosome 1"/>
</dbReference>
<dbReference type="GO" id="GO:0005829">
    <property type="term" value="C:cytosol"/>
    <property type="evidence" value="ECO:0007669"/>
    <property type="project" value="TreeGrafter"/>
</dbReference>
<dbReference type="GO" id="GO:0016597">
    <property type="term" value="F:amino acid binding"/>
    <property type="evidence" value="ECO:0007669"/>
    <property type="project" value="InterPro"/>
</dbReference>
<dbReference type="GO" id="GO:0004070">
    <property type="term" value="F:aspartate carbamoyltransferase activity"/>
    <property type="evidence" value="ECO:0007669"/>
    <property type="project" value="UniProtKB-UniRule"/>
</dbReference>
<dbReference type="GO" id="GO:0006207">
    <property type="term" value="P:'de novo' pyrimidine nucleobase biosynthetic process"/>
    <property type="evidence" value="ECO:0007669"/>
    <property type="project" value="InterPro"/>
</dbReference>
<dbReference type="GO" id="GO:0044205">
    <property type="term" value="P:'de novo' UMP biosynthetic process"/>
    <property type="evidence" value="ECO:0007669"/>
    <property type="project" value="UniProtKB-UniRule"/>
</dbReference>
<dbReference type="GO" id="GO:0006520">
    <property type="term" value="P:amino acid metabolic process"/>
    <property type="evidence" value="ECO:0007669"/>
    <property type="project" value="InterPro"/>
</dbReference>
<dbReference type="FunFam" id="3.40.50.1370:FF:000007">
    <property type="entry name" value="Aspartate carbamoyltransferase"/>
    <property type="match status" value="1"/>
</dbReference>
<dbReference type="Gene3D" id="3.40.50.1370">
    <property type="entry name" value="Aspartate/ornithine carbamoyltransferase"/>
    <property type="match status" value="2"/>
</dbReference>
<dbReference type="HAMAP" id="MF_00001">
    <property type="entry name" value="Asp_carb_tr"/>
    <property type="match status" value="1"/>
</dbReference>
<dbReference type="InterPro" id="IPR006132">
    <property type="entry name" value="Asp/Orn_carbamoyltranf_P-bd"/>
</dbReference>
<dbReference type="InterPro" id="IPR006130">
    <property type="entry name" value="Asp/Orn_carbamoylTrfase"/>
</dbReference>
<dbReference type="InterPro" id="IPR036901">
    <property type="entry name" value="Asp/Orn_carbamoylTrfase_sf"/>
</dbReference>
<dbReference type="InterPro" id="IPR002082">
    <property type="entry name" value="Asp_carbamoyltransf"/>
</dbReference>
<dbReference type="InterPro" id="IPR006131">
    <property type="entry name" value="Asp_carbamoyltransf_Asp/Orn-bd"/>
</dbReference>
<dbReference type="NCBIfam" id="TIGR00670">
    <property type="entry name" value="asp_carb_tr"/>
    <property type="match status" value="1"/>
</dbReference>
<dbReference type="NCBIfam" id="NF002032">
    <property type="entry name" value="PRK00856.1"/>
    <property type="match status" value="1"/>
</dbReference>
<dbReference type="PANTHER" id="PTHR45753:SF6">
    <property type="entry name" value="ASPARTATE CARBAMOYLTRANSFERASE"/>
    <property type="match status" value="1"/>
</dbReference>
<dbReference type="PANTHER" id="PTHR45753">
    <property type="entry name" value="ORNITHINE CARBAMOYLTRANSFERASE, MITOCHONDRIAL"/>
    <property type="match status" value="1"/>
</dbReference>
<dbReference type="Pfam" id="PF00185">
    <property type="entry name" value="OTCace"/>
    <property type="match status" value="1"/>
</dbReference>
<dbReference type="Pfam" id="PF02729">
    <property type="entry name" value="OTCace_N"/>
    <property type="match status" value="1"/>
</dbReference>
<dbReference type="PRINTS" id="PR00100">
    <property type="entry name" value="AOTCASE"/>
</dbReference>
<dbReference type="PRINTS" id="PR00101">
    <property type="entry name" value="ATCASE"/>
</dbReference>
<dbReference type="SUPFAM" id="SSF53671">
    <property type="entry name" value="Aspartate/ornithine carbamoyltransferase"/>
    <property type="match status" value="1"/>
</dbReference>
<dbReference type="PROSITE" id="PS00097">
    <property type="entry name" value="CARBAMOYLTRANSFERASE"/>
    <property type="match status" value="1"/>
</dbReference>
<name>PYRB_BURO0</name>
<evidence type="ECO:0000255" key="1">
    <source>
        <dbReference type="HAMAP-Rule" id="MF_00001"/>
    </source>
</evidence>
<comment type="function">
    <text evidence="1">Catalyzes the condensation of carbamoyl phosphate and aspartate to form carbamoyl aspartate and inorganic phosphate, the committed step in the de novo pyrimidine nucleotide biosynthesis pathway.</text>
</comment>
<comment type="catalytic activity">
    <reaction evidence="1">
        <text>carbamoyl phosphate + L-aspartate = N-carbamoyl-L-aspartate + phosphate + H(+)</text>
        <dbReference type="Rhea" id="RHEA:20013"/>
        <dbReference type="ChEBI" id="CHEBI:15378"/>
        <dbReference type="ChEBI" id="CHEBI:29991"/>
        <dbReference type="ChEBI" id="CHEBI:32814"/>
        <dbReference type="ChEBI" id="CHEBI:43474"/>
        <dbReference type="ChEBI" id="CHEBI:58228"/>
        <dbReference type="EC" id="2.1.3.2"/>
    </reaction>
</comment>
<comment type="pathway">
    <text evidence="1">Pyrimidine metabolism; UMP biosynthesis via de novo pathway; (S)-dihydroorotate from bicarbonate: step 2/3.</text>
</comment>
<comment type="subunit">
    <text evidence="1">Heterododecamer (2C3:3R2) of six catalytic PyrB chains organized as two trimers (C3), and six regulatory PyrI chains organized as three dimers (R2).</text>
</comment>
<comment type="similarity">
    <text evidence="1">Belongs to the aspartate/ornithine carbamoyltransferase superfamily. ATCase family.</text>
</comment>
<accession>B1JWP2</accession>
<proteinExistence type="inferred from homology"/>
<gene>
    <name evidence="1" type="primary">pyrB</name>
    <name type="ordered locus">Bcenmc03_0838</name>
</gene>
<protein>
    <recommendedName>
        <fullName evidence="1">Aspartate carbamoyltransferase catalytic subunit</fullName>
        <ecNumber evidence="1">2.1.3.2</ecNumber>
    </recommendedName>
    <alternativeName>
        <fullName evidence="1">Aspartate transcarbamylase</fullName>
        <shortName evidence="1">ATCase</shortName>
    </alternativeName>
</protein>
<sequence length="343" mass="37256">MTTDTTGRAGNPAAAASPDRFRYGFLKGNPQLTKNGELKHLLSIEGLPRSIVNHILDTAEQFVSVTDREVKKVPLLRGKSVFNLFFENSTRTRTTFEIAATRLSADVLNLNINASSTSKGESLLDTINNLSAMHADLFVVRHASSGAPYLIAEHCAPHVHVINAGDGRHAHPTQGLLDMYTIRHYKRDFTKLRVAIVGDILHSRVARSDIHALTTLGVPEVRAIGPRTLLPGGLEQMGVKVFHNLDEGLKGVDVIIMLRLQNERMSGALLPSAQEYFKTWGLTPERLALAAPDAIVMHPGPMNRGVEIDSQVADGPQSVILNQVTFGIAVRMAVMGIVAGNSD</sequence>
<reference key="1">
    <citation type="submission" date="2008-02" db="EMBL/GenBank/DDBJ databases">
        <title>Complete sequence of chromosome 1 of Burkholderia cenocepacia MC0-3.</title>
        <authorList>
            <person name="Copeland A."/>
            <person name="Lucas S."/>
            <person name="Lapidus A."/>
            <person name="Barry K."/>
            <person name="Bruce D."/>
            <person name="Goodwin L."/>
            <person name="Glavina del Rio T."/>
            <person name="Dalin E."/>
            <person name="Tice H."/>
            <person name="Pitluck S."/>
            <person name="Chain P."/>
            <person name="Malfatti S."/>
            <person name="Shin M."/>
            <person name="Vergez L."/>
            <person name="Schmutz J."/>
            <person name="Larimer F."/>
            <person name="Land M."/>
            <person name="Hauser L."/>
            <person name="Kyrpides N."/>
            <person name="Mikhailova N."/>
            <person name="Tiedje J."/>
            <person name="Richardson P."/>
        </authorList>
    </citation>
    <scope>NUCLEOTIDE SEQUENCE [LARGE SCALE GENOMIC DNA]</scope>
    <source>
        <strain>MC0-3</strain>
    </source>
</reference>
<feature type="chain" id="PRO_1000088742" description="Aspartate carbamoyltransferase catalytic subunit">
    <location>
        <begin position="1"/>
        <end position="343"/>
    </location>
</feature>
<feature type="binding site" evidence="1">
    <location>
        <position position="91"/>
    </location>
    <ligand>
        <name>carbamoyl phosphate</name>
        <dbReference type="ChEBI" id="CHEBI:58228"/>
    </ligand>
</feature>
<feature type="binding site" evidence="1">
    <location>
        <position position="92"/>
    </location>
    <ligand>
        <name>carbamoyl phosphate</name>
        <dbReference type="ChEBI" id="CHEBI:58228"/>
    </ligand>
</feature>
<feature type="binding site" evidence="1">
    <location>
        <position position="119"/>
    </location>
    <ligand>
        <name>L-aspartate</name>
        <dbReference type="ChEBI" id="CHEBI:29991"/>
    </ligand>
</feature>
<feature type="binding site" evidence="1">
    <location>
        <position position="141"/>
    </location>
    <ligand>
        <name>carbamoyl phosphate</name>
        <dbReference type="ChEBI" id="CHEBI:58228"/>
    </ligand>
</feature>
<feature type="binding site" evidence="1">
    <location>
        <position position="171"/>
    </location>
    <ligand>
        <name>carbamoyl phosphate</name>
        <dbReference type="ChEBI" id="CHEBI:58228"/>
    </ligand>
</feature>
<feature type="binding site" evidence="1">
    <location>
        <position position="174"/>
    </location>
    <ligand>
        <name>carbamoyl phosphate</name>
        <dbReference type="ChEBI" id="CHEBI:58228"/>
    </ligand>
</feature>
<feature type="binding site" evidence="1">
    <location>
        <position position="204"/>
    </location>
    <ligand>
        <name>L-aspartate</name>
        <dbReference type="ChEBI" id="CHEBI:29991"/>
    </ligand>
</feature>
<feature type="binding site" evidence="1">
    <location>
        <position position="259"/>
    </location>
    <ligand>
        <name>L-aspartate</name>
        <dbReference type="ChEBI" id="CHEBI:29991"/>
    </ligand>
</feature>
<feature type="binding site" evidence="1">
    <location>
        <position position="300"/>
    </location>
    <ligand>
        <name>carbamoyl phosphate</name>
        <dbReference type="ChEBI" id="CHEBI:58228"/>
    </ligand>
</feature>
<feature type="binding site" evidence="1">
    <location>
        <position position="301"/>
    </location>
    <ligand>
        <name>carbamoyl phosphate</name>
        <dbReference type="ChEBI" id="CHEBI:58228"/>
    </ligand>
</feature>
<organism>
    <name type="scientific">Burkholderia orbicola (strain MC0-3)</name>
    <dbReference type="NCBI Taxonomy" id="406425"/>
    <lineage>
        <taxon>Bacteria</taxon>
        <taxon>Pseudomonadati</taxon>
        <taxon>Pseudomonadota</taxon>
        <taxon>Betaproteobacteria</taxon>
        <taxon>Burkholderiales</taxon>
        <taxon>Burkholderiaceae</taxon>
        <taxon>Burkholderia</taxon>
        <taxon>Burkholderia cepacia complex</taxon>
        <taxon>Burkholderia orbicola</taxon>
    </lineage>
</organism>